<feature type="chain" id="PRO_0000147074" description="Phosphoenolpyruvate-protein phosphotransferase">
    <location>
        <begin position="1"/>
        <end position="572"/>
    </location>
</feature>
<feature type="active site" description="Tele-phosphohistidine intermediate" evidence="1">
    <location>
        <position position="190"/>
    </location>
</feature>
<feature type="active site" description="Proton donor" evidence="1">
    <location>
        <position position="503"/>
    </location>
</feature>
<feature type="binding site" evidence="2">
    <location>
        <position position="297"/>
    </location>
    <ligand>
        <name>phosphoenolpyruvate</name>
        <dbReference type="ChEBI" id="CHEBI:58702"/>
    </ligand>
</feature>
<feature type="binding site" evidence="1">
    <location>
        <position position="333"/>
    </location>
    <ligand>
        <name>phosphoenolpyruvate</name>
        <dbReference type="ChEBI" id="CHEBI:58702"/>
    </ligand>
</feature>
<feature type="binding site" evidence="1">
    <location>
        <position position="432"/>
    </location>
    <ligand>
        <name>Mg(2+)</name>
        <dbReference type="ChEBI" id="CHEBI:18420"/>
    </ligand>
</feature>
<feature type="binding site" evidence="1">
    <location>
        <begin position="455"/>
        <end position="456"/>
    </location>
    <ligand>
        <name>phosphoenolpyruvate</name>
        <dbReference type="ChEBI" id="CHEBI:58702"/>
    </ligand>
</feature>
<feature type="binding site" evidence="1">
    <location>
        <position position="456"/>
    </location>
    <ligand>
        <name>Mg(2+)</name>
        <dbReference type="ChEBI" id="CHEBI:18420"/>
    </ligand>
</feature>
<feature type="binding site" evidence="2">
    <location>
        <position position="466"/>
    </location>
    <ligand>
        <name>phosphoenolpyruvate</name>
        <dbReference type="ChEBI" id="CHEBI:58702"/>
    </ligand>
</feature>
<accession>O31149</accession>
<reference key="1">
    <citation type="journal article" date="2001" name="Science">
        <title>Comparative genomics of Listeria species.</title>
        <authorList>
            <person name="Glaser P."/>
            <person name="Frangeul L."/>
            <person name="Buchrieser C."/>
            <person name="Rusniok C."/>
            <person name="Amend A."/>
            <person name="Baquero F."/>
            <person name="Berche P."/>
            <person name="Bloecker H."/>
            <person name="Brandt P."/>
            <person name="Chakraborty T."/>
            <person name="Charbit A."/>
            <person name="Chetouani F."/>
            <person name="Couve E."/>
            <person name="de Daruvar A."/>
            <person name="Dehoux P."/>
            <person name="Domann E."/>
            <person name="Dominguez-Bernal G."/>
            <person name="Duchaud E."/>
            <person name="Durant L."/>
            <person name="Dussurget O."/>
            <person name="Entian K.-D."/>
            <person name="Fsihi H."/>
            <person name="Garcia-del Portillo F."/>
            <person name="Garrido P."/>
            <person name="Gautier L."/>
            <person name="Goebel W."/>
            <person name="Gomez-Lopez N."/>
            <person name="Hain T."/>
            <person name="Hauf J."/>
            <person name="Jackson D."/>
            <person name="Jones L.-M."/>
            <person name="Kaerst U."/>
            <person name="Kreft J."/>
            <person name="Kuhn M."/>
            <person name="Kunst F."/>
            <person name="Kurapkat G."/>
            <person name="Madueno E."/>
            <person name="Maitournam A."/>
            <person name="Mata Vicente J."/>
            <person name="Ng E."/>
            <person name="Nedjari H."/>
            <person name="Nordsiek G."/>
            <person name="Novella S."/>
            <person name="de Pablos B."/>
            <person name="Perez-Diaz J.-C."/>
            <person name="Purcell R."/>
            <person name="Remmel B."/>
            <person name="Rose M."/>
            <person name="Schlueter T."/>
            <person name="Simoes N."/>
            <person name="Tierrez A."/>
            <person name="Vazquez-Boland J.-A."/>
            <person name="Voss H."/>
            <person name="Wehland J."/>
            <person name="Cossart P."/>
        </authorList>
    </citation>
    <scope>NUCLEOTIDE SEQUENCE [LARGE SCALE GENOMIC DNA]</scope>
    <source>
        <strain>ATCC BAA-679 / EGD-e</strain>
    </source>
</reference>
<reference key="2">
    <citation type="journal article" date="1998" name="Appl. Environ. Microbiol.">
        <title>Cloning and expression of the Listeria monocytogenes Scott A ptsH and ptsI genes, coding for HPr and enzyme I, respectively, of the phosphotransferase system.</title>
        <authorList>
            <person name="Christensen D.P."/>
            <person name="Benson A.K."/>
            <person name="Hutkins R.W."/>
        </authorList>
    </citation>
    <scope>NUCLEOTIDE SEQUENCE [GENOMIC DNA] OF 1-509</scope>
    <source>
        <strain>Scott A</strain>
    </source>
</reference>
<organism>
    <name type="scientific">Listeria monocytogenes serovar 1/2a (strain ATCC BAA-679 / EGD-e)</name>
    <dbReference type="NCBI Taxonomy" id="169963"/>
    <lineage>
        <taxon>Bacteria</taxon>
        <taxon>Bacillati</taxon>
        <taxon>Bacillota</taxon>
        <taxon>Bacilli</taxon>
        <taxon>Bacillales</taxon>
        <taxon>Listeriaceae</taxon>
        <taxon>Listeria</taxon>
    </lineage>
</organism>
<evidence type="ECO:0000250" key="1">
    <source>
        <dbReference type="UniProtKB" id="P08839"/>
    </source>
</evidence>
<evidence type="ECO:0000250" key="2">
    <source>
        <dbReference type="UniProtKB" id="P23533"/>
    </source>
</evidence>
<evidence type="ECO:0000303" key="3">
    <source>
    </source>
</evidence>
<evidence type="ECO:0000305" key="4"/>
<comment type="function">
    <text evidence="1">General (non sugar-specific) component of the phosphoenolpyruvate-dependent sugar phosphotransferase system (sugar PTS). This major carbohydrate active-transport system catalyzes the phosphorylation of incoming sugar substrates concomitantly with their translocation across the cell membrane. Enzyme I transfers the phosphoryl group from phosphoenolpyruvate (PEP) to the phosphoryl carrier protein (HPr).</text>
</comment>
<comment type="catalytic activity">
    <reaction evidence="1">
        <text>L-histidyl-[protein] + phosphoenolpyruvate = N(pros)-phospho-L-histidyl-[protein] + pyruvate</text>
        <dbReference type="Rhea" id="RHEA:23880"/>
        <dbReference type="Rhea" id="RHEA-COMP:9745"/>
        <dbReference type="Rhea" id="RHEA-COMP:9746"/>
        <dbReference type="ChEBI" id="CHEBI:15361"/>
        <dbReference type="ChEBI" id="CHEBI:29979"/>
        <dbReference type="ChEBI" id="CHEBI:58702"/>
        <dbReference type="ChEBI" id="CHEBI:64837"/>
        <dbReference type="EC" id="2.7.3.9"/>
    </reaction>
</comment>
<comment type="cofactor">
    <cofactor evidence="1">
        <name>Mg(2+)</name>
        <dbReference type="ChEBI" id="CHEBI:18420"/>
    </cofactor>
</comment>
<comment type="subunit">
    <text evidence="1">Homodimer.</text>
</comment>
<comment type="subcellular location">
    <subcellularLocation>
        <location evidence="4">Cytoplasm</location>
    </subcellularLocation>
</comment>
<comment type="domain">
    <text evidence="1">The N-terminal domain contains the HPr binding site, the central domain the pyrophosphate/phosphate carrier histidine, and the C-terminal domain the pyruvate binding site.</text>
</comment>
<comment type="miscellaneous">
    <text evidence="1">The reaction takes place in three steps, mediated by a phosphocarrier histidine residue located on the surface of the central domain. The two first partial reactions are catalyzed at an active site located on the N-terminal domain, and the third partial reaction is catalyzed at an active site located on the C-terminal domain. For catalytic turnover, the central domain swivels from the concave surface of the N-terminal domain to that of the C-terminal domain.</text>
</comment>
<comment type="similarity">
    <text evidence="4">Belongs to the PEP-utilizing enzyme family.</text>
</comment>
<sequence length="572" mass="63212">MAKELKGIAASDGIAIAKAYLLVEPDLSYEKTEVTDVESEVKRFESALEVSRTELSMIREKAAKDLGEDKAQIFDAHLLVLNDPELTGPIEESIKNSKTNAETALQETTDMFIGMFESMDNEYMRERAADIKDVRKRVLSHLLGVTIPNPALIDEEVVVVAADLTPSDTAQLNRNFVKGFVTDIGGRTSHSAIMARSLEIPAVVGTKEVTASVAKNDIVIIDGLEGNVIIHPTEEQIAHYEKIKSDFALQQAEWDKLKNEKTVSKDGVHVELAANIGTPNDLEGVISNGGEAVGLYRTEFLYMGRDNFPTEEEQFEAYKAVVSGMDGKSVVVRTLDIGGDKTLPYLELPEEMNPFLGFRAIRLCFANEELFRTQLRALLRASVYGNLKIMFPMIATVNEFRQARDILLDEKAKLKAAGTEVSDSIELGIMIEIPAAAVLADQFAKEVDFFSIGTNDLIQYTMAADRMNERVSYLYQPYNPSILRLVKMVIDASHKEGKWTGMCGEMAGDQTAVPLLLGLGLDEFSMSASSILKSRSLIKRLDQSEMVKLAEEALNKSTAEEVVELVEKYTAE</sequence>
<gene>
    <name type="primary">ptsI</name>
    <name type="ordered locus">lmo1003</name>
</gene>
<name>PT1_LISMO</name>
<dbReference type="EC" id="2.7.3.9" evidence="1"/>
<dbReference type="EMBL" id="AL591977">
    <property type="protein sequence ID" value="CAC99081.1"/>
    <property type="molecule type" value="Genomic_DNA"/>
</dbReference>
<dbReference type="EMBL" id="AF030824">
    <property type="protein sequence ID" value="AAC36128.1"/>
    <property type="molecule type" value="Genomic_DNA"/>
</dbReference>
<dbReference type="PIR" id="AC1200">
    <property type="entry name" value="AC1200"/>
</dbReference>
<dbReference type="RefSeq" id="NP_464528.1">
    <property type="nucleotide sequence ID" value="NC_003210.1"/>
</dbReference>
<dbReference type="SMR" id="O31149"/>
<dbReference type="STRING" id="169963.gene:17593659"/>
<dbReference type="PaxDb" id="169963-lmo1003"/>
<dbReference type="EnsemblBacteria" id="CAC99081">
    <property type="protein sequence ID" value="CAC99081"/>
    <property type="gene ID" value="CAC99081"/>
</dbReference>
<dbReference type="GeneID" id="986170"/>
<dbReference type="KEGG" id="lmo:lmo1003"/>
<dbReference type="PATRIC" id="fig|169963.11.peg.1031"/>
<dbReference type="eggNOG" id="COG1080">
    <property type="taxonomic scope" value="Bacteria"/>
</dbReference>
<dbReference type="HOGENOM" id="CLU_007308_7_0_9"/>
<dbReference type="OrthoDB" id="9765468at2"/>
<dbReference type="PhylomeDB" id="O31149"/>
<dbReference type="BioCyc" id="LMON169963:LMO1003-MONOMER"/>
<dbReference type="Proteomes" id="UP000000817">
    <property type="component" value="Chromosome"/>
</dbReference>
<dbReference type="GO" id="GO:0005737">
    <property type="term" value="C:cytoplasm"/>
    <property type="evidence" value="ECO:0007669"/>
    <property type="project" value="UniProtKB-SubCell"/>
</dbReference>
<dbReference type="GO" id="GO:0016301">
    <property type="term" value="F:kinase activity"/>
    <property type="evidence" value="ECO:0007669"/>
    <property type="project" value="UniProtKB-KW"/>
</dbReference>
<dbReference type="GO" id="GO:0046872">
    <property type="term" value="F:metal ion binding"/>
    <property type="evidence" value="ECO:0007669"/>
    <property type="project" value="UniProtKB-KW"/>
</dbReference>
<dbReference type="GO" id="GO:0008965">
    <property type="term" value="F:phosphoenolpyruvate-protein phosphotransferase activity"/>
    <property type="evidence" value="ECO:0000318"/>
    <property type="project" value="GO_Central"/>
</dbReference>
<dbReference type="GO" id="GO:0015764">
    <property type="term" value="P:N-acetylglucosamine transport"/>
    <property type="evidence" value="ECO:0000318"/>
    <property type="project" value="GO_Central"/>
</dbReference>
<dbReference type="GO" id="GO:0009401">
    <property type="term" value="P:phosphoenolpyruvate-dependent sugar phosphotransferase system"/>
    <property type="evidence" value="ECO:0007669"/>
    <property type="project" value="UniProtKB-KW"/>
</dbReference>
<dbReference type="FunFam" id="1.10.274.10:FF:000001">
    <property type="entry name" value="Phosphoenolpyruvate-protein phosphotransferase"/>
    <property type="match status" value="1"/>
</dbReference>
<dbReference type="FunFam" id="3.20.20.60:FF:000007">
    <property type="entry name" value="Phosphoenolpyruvate-protein phosphotransferase"/>
    <property type="match status" value="1"/>
</dbReference>
<dbReference type="Gene3D" id="3.20.20.60">
    <property type="entry name" value="Phosphoenolpyruvate-binding domains"/>
    <property type="match status" value="1"/>
</dbReference>
<dbReference type="Gene3D" id="3.50.30.10">
    <property type="entry name" value="Phosphohistidine domain"/>
    <property type="match status" value="1"/>
</dbReference>
<dbReference type="Gene3D" id="1.10.274.10">
    <property type="entry name" value="PtsI, HPr-binding domain"/>
    <property type="match status" value="1"/>
</dbReference>
<dbReference type="InterPro" id="IPR008279">
    <property type="entry name" value="PEP-util_enz_mobile_dom"/>
</dbReference>
<dbReference type="InterPro" id="IPR050499">
    <property type="entry name" value="PEP-utilizing_PTS_enzyme"/>
</dbReference>
<dbReference type="InterPro" id="IPR018274">
    <property type="entry name" value="PEP_util_AS"/>
</dbReference>
<dbReference type="InterPro" id="IPR000121">
    <property type="entry name" value="PEP_util_C"/>
</dbReference>
<dbReference type="InterPro" id="IPR023151">
    <property type="entry name" value="PEP_util_CS"/>
</dbReference>
<dbReference type="InterPro" id="IPR036637">
    <property type="entry name" value="Phosphohistidine_dom_sf"/>
</dbReference>
<dbReference type="InterPro" id="IPR024692">
    <property type="entry name" value="PTS_EI"/>
</dbReference>
<dbReference type="InterPro" id="IPR006318">
    <property type="entry name" value="PTS_EI-like"/>
</dbReference>
<dbReference type="InterPro" id="IPR008731">
    <property type="entry name" value="PTS_EIN"/>
</dbReference>
<dbReference type="InterPro" id="IPR036618">
    <property type="entry name" value="PtsI_HPr-bd_sf"/>
</dbReference>
<dbReference type="InterPro" id="IPR015813">
    <property type="entry name" value="Pyrv/PenolPyrv_kinase-like_dom"/>
</dbReference>
<dbReference type="InterPro" id="IPR040442">
    <property type="entry name" value="Pyrv_kinase-like_dom_sf"/>
</dbReference>
<dbReference type="NCBIfam" id="TIGR01417">
    <property type="entry name" value="PTS_I_fam"/>
    <property type="match status" value="1"/>
</dbReference>
<dbReference type="PANTHER" id="PTHR46244">
    <property type="entry name" value="PHOSPHOENOLPYRUVATE-PROTEIN PHOSPHOTRANSFERASE"/>
    <property type="match status" value="1"/>
</dbReference>
<dbReference type="PANTHER" id="PTHR46244:SF3">
    <property type="entry name" value="PHOSPHOENOLPYRUVATE-PROTEIN PHOSPHOTRANSFERASE"/>
    <property type="match status" value="1"/>
</dbReference>
<dbReference type="Pfam" id="PF05524">
    <property type="entry name" value="PEP-utilisers_N"/>
    <property type="match status" value="1"/>
</dbReference>
<dbReference type="Pfam" id="PF00391">
    <property type="entry name" value="PEP-utilizers"/>
    <property type="match status" value="1"/>
</dbReference>
<dbReference type="Pfam" id="PF02896">
    <property type="entry name" value="PEP-utilizers_C"/>
    <property type="match status" value="1"/>
</dbReference>
<dbReference type="PIRSF" id="PIRSF000732">
    <property type="entry name" value="PTS_enzyme_I"/>
    <property type="match status" value="1"/>
</dbReference>
<dbReference type="PRINTS" id="PR01736">
    <property type="entry name" value="PHPHTRNFRASE"/>
</dbReference>
<dbReference type="SUPFAM" id="SSF47831">
    <property type="entry name" value="Enzyme I of the PEP:sugar phosphotransferase system HPr-binding (sub)domain"/>
    <property type="match status" value="1"/>
</dbReference>
<dbReference type="SUPFAM" id="SSF51621">
    <property type="entry name" value="Phosphoenolpyruvate/pyruvate domain"/>
    <property type="match status" value="1"/>
</dbReference>
<dbReference type="SUPFAM" id="SSF52009">
    <property type="entry name" value="Phosphohistidine domain"/>
    <property type="match status" value="1"/>
</dbReference>
<dbReference type="PROSITE" id="PS00742">
    <property type="entry name" value="PEP_ENZYMES_2"/>
    <property type="match status" value="1"/>
</dbReference>
<dbReference type="PROSITE" id="PS00370">
    <property type="entry name" value="PEP_ENZYMES_PHOS_SITE"/>
    <property type="match status" value="1"/>
</dbReference>
<keyword id="KW-0963">Cytoplasm</keyword>
<keyword id="KW-0418">Kinase</keyword>
<keyword id="KW-0460">Magnesium</keyword>
<keyword id="KW-0479">Metal-binding</keyword>
<keyword id="KW-0598">Phosphotransferase system</keyword>
<keyword id="KW-1185">Reference proteome</keyword>
<keyword id="KW-0762">Sugar transport</keyword>
<keyword id="KW-0808">Transferase</keyword>
<keyword id="KW-0813">Transport</keyword>
<protein>
    <recommendedName>
        <fullName evidence="3">Phosphoenolpyruvate-protein phosphotransferase</fullName>
        <ecNumber evidence="1">2.7.3.9</ecNumber>
    </recommendedName>
    <alternativeName>
        <fullName evidence="3">Phosphotransferase system, enzyme I</fullName>
    </alternativeName>
</protein>
<proteinExistence type="inferred from homology"/>